<comment type="function">
    <text evidence="1">Transcriptional activator that increases RNA Pol II processivity, thereby increasing the level of full-length viral transcripts. Recognizes a hairpin structure at the 5'-LTR of the nascent viral mRNAs referred to as the transactivation responsive RNA element (TAR) and recruits the cyclin T1-CDK9 complex (P-TEFb complex) that will in turn hyperphosphorylate the RNA polymerase II to allow efficient elongation. The CDK9 component of P-TEFb and other Tat-activated kinases hyperphosphorylate the C-terminus of RNA Pol II that becomes stabilized and much more processive. Other factors such as HTATSF1/Tat-SF1, SUPT5H/SPT5, and HTATIP2 are also important for Tat's function. Besides its effect on RNA Pol II processivity, Tat induces chromatin remodeling of proviral genes by recruiting the histone acetyltransferases (HATs) CREBBP, EP300 and PCAF to the chromatin. This also contributes to the increase in proviral transcription rate, especially when the provirus integrates in transcriptionally silent region of the host genome. To ensure maximal activation of the LTR, Tat mediates nuclear translocation of NF-kappa-B by interacting with host RELA. Through its interaction with host TBP, Tat may also modulate transcription initiation. Tat can reactivate a latently infected cell by penetrating in it and transactivating its LTR promoter. In the cytoplasm, Tat is thought to act as a translational activator of HIV-1 mRNAs.</text>
</comment>
<comment type="function">
    <text evidence="1">Extracellular circulating Tat can be endocytosed by surrounding uninfected cells via the binding to several surface receptors such as CD26, CXCR4, heparan sulfate proteoglycans (HSPG) or LDLR. Neurons are rarely infected, but they internalize Tat via their LDLR. Through its interaction with nuclear HATs, Tat is potentially able to control the acetylation-dependent cellular gene expression. Modulates the expression of many cellular genes involved in cell survival, proliferation or in coding for cytokines or cytokine receptors. Tat plays a role in T-cell and neurons apoptosis. Tat induced neurotoxicity and apoptosis probably contribute to neuroAIDS. Circulating Tat also acts as a chemokine-like and/or growth factor-like molecule that binds to specific receptors on the surface of the cells, affecting many cellular pathways. In the vascular system, Tat binds to ITGAV/ITGB3 and ITGA5/ITGB1 integrins dimers at the surface of endothelial cells and competes with bFGF for heparin-binding sites, leading to an excess of soluble bFGF.</text>
</comment>
<comment type="subunit">
    <text evidence="1">Interacts with host CCNT1. Associates with the P-TEFb complex composed at least of Tat, P-TEFb (CDK9 and CCNT1), TAR RNA, RNA Pol II. Recruits the HATs CREBBP, TAF1/TFIID, EP300, PCAF and GCN5L2. Interacts with host KAT5/Tip60; this interaction targets the latter to degradation. Interacts with the host deacetylase SIRT1. Interacts with host capping enzyme RNGTT; this interaction stimulates RNGTT. Binds to host KDR, and to the host integrins ITGAV/ITGB3 and ITGA5/ITGB1. Interacts with host KPNB1/importin beta-1 without previous binding to KPNA1/importin alpha-1. Interacts with EIF2AK2. Interacts with host nucleosome assembly protein NAP1L1; this interaction may be required for the transport of Tat within the nucleus, since the two proteins interact at the nuclear rim. Interacts with host C1QBP/SF2P32; this interaction involves lysine-acetylated Tat. Interacts with the host chemokine receptors CCR2, CCR3 and CXCR4. Interacts with host DPP4/CD26; this interaction may trigger an anti-proliferative effect. Interacts with host LDLR. Interacts with the host extracellular matrix metalloproteinase MMP1. Interacts with host PRMT6; this interaction mediates Tat's methylation. Interacts with, and is ubiquitinated by MDM2/Hdm2. Interacts with host PSMC3 and HTATIP2. Interacts with STAB1; this interaction may overcome SATB1-mediated repression of IL2 and IL2RA (interleukin) in T cells by binding to the same domain than HDAC1. Interacts (when acetylated) with human CDK13, thereby increasing HIV-1 mRNA splicing and promoting the production of the doubly spliced HIV-1 protein Nef. Interacts with host TBP; this interaction modulates the activity of transcriptional pre-initiation complex. Interacts with host RELA. Interacts with host PLSCR1; this interaction negatively regulates Tat transactivation activity by altering its subcellular distribution.</text>
</comment>
<comment type="subcellular location">
    <subcellularLocation>
        <location evidence="1">Host nucleus</location>
        <location evidence="1">Host nucleolus</location>
    </subcellularLocation>
    <subcellularLocation>
        <location evidence="1">Host cytoplasm</location>
    </subcellularLocation>
    <subcellularLocation>
        <location evidence="1">Secreted</location>
    </subcellularLocation>
    <text evidence="1">Probably localizes to both nuclear and nucleolar compartments. Nuclear localization is mediated through the interaction of the nuclear localization signal with importin KPNB1. Secretion occurs through a Golgi-independent pathway. Tat is released from infected cells to the extracellular space where it remains associated to the cell membrane, or is secreted into the cerebrospinal fluid and sera. Extracellular Tat can be endocytosed by surrounding uninfected cells via binding to several receptors depending on the cell type.</text>
</comment>
<comment type="alternative products">
    <event type="alternative splicing"/>
    <isoform>
        <id>O70899-1</id>
        <name>Long</name>
        <sequence type="displayed"/>
    </isoform>
    <isoform>
        <id>O70899-2</id>
        <name>Short</name>
        <sequence type="described" ref="VSP_022399"/>
    </isoform>
</comment>
<comment type="domain">
    <text evidence="1">The cell attachment site mediates the interaction with ITGAV/ITGB3 and ITGA5/ITGB1 integrins, leading to vascular cell migration and invasion. This interaction also provides endothelial cells with the adhesion signal they require to grow in response to mitogens.</text>
</comment>
<comment type="domain">
    <text evidence="1">The Cys-rich region may bind 2 zinc ions. This region is involved in binding to KAT5.</text>
</comment>
<comment type="domain">
    <text evidence="1">The transactivation domain mediates the interaction with CCNT1, GCN5L2, and MDM2.</text>
</comment>
<comment type="domain">
    <text evidence="1">The Arg-rich RNA-binding region binds the TAR RNA. This region also mediates the nuclear localization through direct binding to KPNB1 and is involved in Tat's transfer across cell membranes (protein transduction). The same region is required for the interaction with EP300, PCAF, EIF2AK2 and KDR.</text>
</comment>
<comment type="PTM">
    <text evidence="1">Asymmetrical arginine methylation by host PRMT6 seems to diminish the transactivation capacity of Tat and affects the interaction with host CCNT1.</text>
</comment>
<comment type="PTM">
    <text evidence="1">Acetylation by EP300, CREBBP, GCN5L2/GCN5 and PCAF regulates the transactivation activity of Tat. EP300-mediated acetylation of Lys-50 promotes dissociation of Tat from the TAR RNA through the competitive binding to PCAF's bromodomain. In addition, the non-acetylated Tat's N-terminus can also interact with PCAF. PCAF-mediated acetylation of Lys-28 enhances Tat's binding to CCNT1. Lys-50 is deacetylated by SIRT1.</text>
</comment>
<comment type="PTM">
    <text evidence="1">Polyubiquitination by host MDM2 does not target Tat to degradation, but activates its transactivation function and fosters interaction with CCNT1 and TAR RNA.</text>
</comment>
<comment type="PTM">
    <text evidence="1">Phosphorylated by EIF2AK2 on serine and threonine residues adjacent to the basic region important for TAR RNA binding and function. Phosphorylation of Tat by EIF2AK2 is dependent on the prior activation of EIF2AK2 by dsRNA.</text>
</comment>
<comment type="miscellaneous">
    <text evidence="1">HIV-1 lineages are divided in three main groups, M (for Major), O (for Outlier), and N (for New, or Non-M, Non-O). The vast majority of strains found worldwide belong to the group M. Group O seems to be endemic to and largely confined to Cameroon and neighboring countries in West Central Africa, where these viruses represent a small minority of HIV-1 strains. The group N is represented by a limited number of isolates from Cameroonian persons. The group M is further subdivided in 9 clades or subtypes (A to D, F to H, J and K).</text>
</comment>
<comment type="miscellaneous">
    <molecule>Isoform Short</molecule>
    <text evidence="3">Expressed in the late stage of the infection cycle, when unspliced viral RNAs are exported to the cytoplasm by the viral Rev protein.</text>
</comment>
<comment type="similarity">
    <text evidence="1">Belongs to the lentiviruses Tat family.</text>
</comment>
<accession>O70899</accession>
<organismHost>
    <name type="scientific">Homo sapiens</name>
    <name type="common">Human</name>
    <dbReference type="NCBI Taxonomy" id="9606"/>
</organismHost>
<sequence>MDPVDPKLEPWNHPGSQPQTACNNCYCKKCCYHCQMCFLKKGLGISYGRKKRSQRHRTPASLQDHQNSISKQPLSRTHGDPTGPKEQKKEVASKTETDP</sequence>
<protein>
    <recommendedName>
        <fullName evidence="1">Protein Tat</fullName>
    </recommendedName>
    <alternativeName>
        <fullName evidence="1">Transactivating regulatory protein</fullName>
    </alternativeName>
</protein>
<keyword id="KW-0007">Acetylation</keyword>
<keyword id="KW-0010">Activator</keyword>
<keyword id="KW-0014">AIDS</keyword>
<keyword id="KW-0025">Alternative splicing</keyword>
<keyword id="KW-0053">Apoptosis</keyword>
<keyword id="KW-1035">Host cytoplasm</keyword>
<keyword id="KW-1048">Host nucleus</keyword>
<keyword id="KW-0945">Host-virus interaction</keyword>
<keyword id="KW-1090">Inhibition of host innate immune response by virus</keyword>
<keyword id="KW-1114">Inhibition of host interferon signaling pathway by virus</keyword>
<keyword id="KW-0922">Interferon antiviral system evasion</keyword>
<keyword id="KW-1017">Isopeptide bond</keyword>
<keyword id="KW-0479">Metal-binding</keyword>
<keyword id="KW-0488">Methylation</keyword>
<keyword id="KW-1122">Modulation of host chromatin by virus</keyword>
<keyword id="KW-1126">Modulation of host PP1 activity by virus</keyword>
<keyword id="KW-0597">Phosphoprotein</keyword>
<keyword id="KW-1185">Reference proteome</keyword>
<keyword id="KW-0694">RNA-binding</keyword>
<keyword id="KW-0964">Secreted</keyword>
<keyword id="KW-0804">Transcription</keyword>
<keyword id="KW-0805">Transcription regulation</keyword>
<keyword id="KW-0832">Ubl conjugation</keyword>
<keyword id="KW-0899">Viral immunoevasion</keyword>
<keyword id="KW-0862">Zinc</keyword>
<proteinExistence type="inferred from homology"/>
<evidence type="ECO:0000255" key="1">
    <source>
        <dbReference type="HAMAP-Rule" id="MF_04079"/>
    </source>
</evidence>
<evidence type="ECO:0000256" key="2">
    <source>
        <dbReference type="SAM" id="MobiDB-lite"/>
    </source>
</evidence>
<evidence type="ECO:0000305" key="3"/>
<organism>
    <name type="scientific">Human immunodeficiency virus type 1 group M subtype H (isolate 90CF056)</name>
    <name type="common">HIV-1</name>
    <dbReference type="NCBI Taxonomy" id="388826"/>
    <lineage>
        <taxon>Viruses</taxon>
        <taxon>Riboviria</taxon>
        <taxon>Pararnavirae</taxon>
        <taxon>Artverviricota</taxon>
        <taxon>Revtraviricetes</taxon>
        <taxon>Ortervirales</taxon>
        <taxon>Retroviridae</taxon>
        <taxon>Orthoretrovirinae</taxon>
        <taxon>Lentivirus</taxon>
        <taxon>Human immunodeficiency virus type 1</taxon>
    </lineage>
</organism>
<reference key="1">
    <citation type="journal article" date="1998" name="J. Virol.">
        <title>A comprehensive panel of near-full-length clones and reference sequences for non-subtype B isolates of human immunodeficiency virus type 1.</title>
        <authorList>
            <person name="Gao F."/>
            <person name="Robertson D.L."/>
            <person name="Carruthers C.D."/>
            <person name="Morrison S.G."/>
            <person name="Jian B."/>
            <person name="Chen Y."/>
            <person name="Barre-Sinoussi F."/>
            <person name="Girard M."/>
            <person name="Srinivasan A."/>
            <person name="Abimiku A.G."/>
            <person name="Shaw G.M."/>
            <person name="Sharp P.M."/>
            <person name="Hahn B.H."/>
        </authorList>
    </citation>
    <scope>NUCLEOTIDE SEQUENCE [GENOMIC DNA]</scope>
</reference>
<reference key="2">
    <citation type="journal article" date="2005" name="Microbes Infect.">
        <title>Decoding Tat: the biology of HIV Tat posttranslational modifications.</title>
        <authorList>
            <person name="Hetzer C."/>
            <person name="Dormeyer W."/>
            <person name="Schnolzer M."/>
            <person name="Ott M."/>
        </authorList>
    </citation>
    <scope>REVIEW</scope>
    <scope>ALTERNATIVE SPLICING</scope>
</reference>
<reference key="3">
    <citation type="journal article" date="2006" name="Front. Biosci.">
        <title>The multiple functions of HIV-1 Tat: proliferation versus apoptosis.</title>
        <authorList>
            <person name="Peruzzi F."/>
        </authorList>
    </citation>
    <scope>REVIEW</scope>
</reference>
<reference key="4">
    <citation type="journal article" date="2006" name="Microbes Infect.">
        <title>HIV tat and neurotoxicity.</title>
        <authorList>
            <person name="King J.E."/>
            <person name="Eugenin E.A."/>
            <person name="Buckner C.M."/>
            <person name="Berman J.W."/>
        </authorList>
    </citation>
    <scope>REVIEW</scope>
</reference>
<name>TAT_HV190</name>
<gene>
    <name evidence="1" type="primary">tat</name>
</gene>
<dbReference type="EMBL" id="AF005496">
    <property type="protein sequence ID" value="AAD03182.1"/>
    <property type="molecule type" value="Genomic_DNA"/>
</dbReference>
<dbReference type="SMR" id="O70899"/>
<dbReference type="Proteomes" id="UP000007685">
    <property type="component" value="Segment"/>
</dbReference>
<dbReference type="GO" id="GO:0005576">
    <property type="term" value="C:extracellular region"/>
    <property type="evidence" value="ECO:0007669"/>
    <property type="project" value="UniProtKB-SubCell"/>
</dbReference>
<dbReference type="GO" id="GO:0030430">
    <property type="term" value="C:host cell cytoplasm"/>
    <property type="evidence" value="ECO:0007669"/>
    <property type="project" value="UniProtKB-SubCell"/>
</dbReference>
<dbReference type="GO" id="GO:0044196">
    <property type="term" value="C:host cell nucleolus"/>
    <property type="evidence" value="ECO:0007669"/>
    <property type="project" value="UniProtKB-SubCell"/>
</dbReference>
<dbReference type="GO" id="GO:0042805">
    <property type="term" value="F:actinin binding"/>
    <property type="evidence" value="ECO:0007669"/>
    <property type="project" value="UniProtKB-UniRule"/>
</dbReference>
<dbReference type="GO" id="GO:0030332">
    <property type="term" value="F:cyclin binding"/>
    <property type="evidence" value="ECO:0007669"/>
    <property type="project" value="UniProtKB-UniRule"/>
</dbReference>
<dbReference type="GO" id="GO:0046872">
    <property type="term" value="F:metal ion binding"/>
    <property type="evidence" value="ECO:0007669"/>
    <property type="project" value="UniProtKB-UniRule"/>
</dbReference>
<dbReference type="GO" id="GO:0019904">
    <property type="term" value="F:protein domain specific binding"/>
    <property type="evidence" value="ECO:0007669"/>
    <property type="project" value="UniProtKB-UniRule"/>
</dbReference>
<dbReference type="GO" id="GO:0004865">
    <property type="term" value="F:protein serine/threonine phosphatase inhibitor activity"/>
    <property type="evidence" value="ECO:0007669"/>
    <property type="project" value="UniProtKB-KW"/>
</dbReference>
<dbReference type="GO" id="GO:0001070">
    <property type="term" value="F:RNA-binding transcription regulator activity"/>
    <property type="evidence" value="ECO:0007669"/>
    <property type="project" value="UniProtKB-UniRule"/>
</dbReference>
<dbReference type="GO" id="GO:1990970">
    <property type="term" value="F:trans-activation response element binding"/>
    <property type="evidence" value="ECO:0007669"/>
    <property type="project" value="UniProtKB-UniRule"/>
</dbReference>
<dbReference type="GO" id="GO:0006351">
    <property type="term" value="P:DNA-templated transcription"/>
    <property type="evidence" value="ECO:0007669"/>
    <property type="project" value="UniProtKB-UniRule"/>
</dbReference>
<dbReference type="GO" id="GO:0032968">
    <property type="term" value="P:positive regulation of transcription elongation by RNA polymerase II"/>
    <property type="evidence" value="ECO:0007669"/>
    <property type="project" value="UniProtKB-UniRule"/>
</dbReference>
<dbReference type="GO" id="GO:0050434">
    <property type="term" value="P:positive regulation of viral transcription"/>
    <property type="evidence" value="ECO:0007669"/>
    <property type="project" value="UniProtKB-UniRule"/>
</dbReference>
<dbReference type="GO" id="GO:0039525">
    <property type="term" value="P:symbiont-mediated perturbation of host chromatin organization"/>
    <property type="evidence" value="ECO:0007669"/>
    <property type="project" value="UniProtKB-UniRule"/>
</dbReference>
<dbReference type="GO" id="GO:0052170">
    <property type="term" value="P:symbiont-mediated suppression of host innate immune response"/>
    <property type="evidence" value="ECO:0007669"/>
    <property type="project" value="UniProtKB-KW"/>
</dbReference>
<dbReference type="GO" id="GO:0039606">
    <property type="term" value="P:symbiont-mediated suppression of host translation initiation"/>
    <property type="evidence" value="ECO:0007669"/>
    <property type="project" value="UniProtKB-KW"/>
</dbReference>
<dbReference type="GO" id="GO:0039502">
    <property type="term" value="P:symbiont-mediated suppression of host type I interferon-mediated signaling pathway"/>
    <property type="evidence" value="ECO:0007669"/>
    <property type="project" value="UniProtKB-UniRule"/>
</dbReference>
<dbReference type="Gene3D" id="4.10.20.10">
    <property type="entry name" value="Tat domain"/>
    <property type="match status" value="1"/>
</dbReference>
<dbReference type="HAMAP" id="MF_04079">
    <property type="entry name" value="HIV_TAT"/>
    <property type="match status" value="1"/>
</dbReference>
<dbReference type="InterPro" id="IPR001831">
    <property type="entry name" value="IV_Tat"/>
</dbReference>
<dbReference type="InterPro" id="IPR036963">
    <property type="entry name" value="Tat_dom_sf"/>
</dbReference>
<dbReference type="Pfam" id="PF00539">
    <property type="entry name" value="Tat"/>
    <property type="match status" value="1"/>
</dbReference>
<dbReference type="PRINTS" id="PR00055">
    <property type="entry name" value="HIVTATDOMAIN"/>
</dbReference>
<feature type="chain" id="PRO_0000244844" description="Protein Tat">
    <location>
        <begin position="1"/>
        <end position="99"/>
    </location>
</feature>
<feature type="region of interest" description="Transactivation" evidence="1">
    <location>
        <begin position="1"/>
        <end position="48"/>
    </location>
</feature>
<feature type="region of interest" description="Interaction with human CREBBP" evidence="1">
    <location>
        <begin position="1"/>
        <end position="24"/>
    </location>
</feature>
<feature type="region of interest" description="Cysteine-rich" evidence="1">
    <location>
        <begin position="22"/>
        <end position="37"/>
    </location>
</feature>
<feature type="region of interest" description="Core" evidence="1">
    <location>
        <begin position="38"/>
        <end position="48"/>
    </location>
</feature>
<feature type="region of interest" description="Disordered" evidence="2">
    <location>
        <begin position="48"/>
        <end position="99"/>
    </location>
</feature>
<feature type="region of interest" description="Interaction with the host capping enzyme RNGTT" evidence="1">
    <location>
        <begin position="49"/>
        <end position="86"/>
    </location>
</feature>
<feature type="short sequence motif" description="Nuclear localization signal, RNA-binding (TAR), and protein transduction" evidence="1">
    <location>
        <begin position="49"/>
        <end position="57"/>
    </location>
</feature>
<feature type="compositionally biased region" description="Basic residues" evidence="2">
    <location>
        <begin position="48"/>
        <end position="58"/>
    </location>
</feature>
<feature type="compositionally biased region" description="Polar residues" evidence="2">
    <location>
        <begin position="60"/>
        <end position="75"/>
    </location>
</feature>
<feature type="compositionally biased region" description="Basic and acidic residues" evidence="2">
    <location>
        <begin position="77"/>
        <end position="99"/>
    </location>
</feature>
<feature type="binding site" evidence="1">
    <location>
        <position position="22"/>
    </location>
    <ligand>
        <name>Zn(2+)</name>
        <dbReference type="ChEBI" id="CHEBI:29105"/>
        <label>1</label>
    </ligand>
</feature>
<feature type="binding site" evidence="1">
    <location>
        <position position="25"/>
    </location>
    <ligand>
        <name>Zn(2+)</name>
        <dbReference type="ChEBI" id="CHEBI:29105"/>
        <label>2</label>
    </ligand>
</feature>
<feature type="binding site" evidence="1">
    <location>
        <position position="27"/>
    </location>
    <ligand>
        <name>Zn(2+)</name>
        <dbReference type="ChEBI" id="CHEBI:29105"/>
        <label>2</label>
    </ligand>
</feature>
<feature type="binding site" evidence="1">
    <location>
        <position position="30"/>
    </location>
    <ligand>
        <name>Zn(2+)</name>
        <dbReference type="ChEBI" id="CHEBI:29105"/>
        <label>2</label>
    </ligand>
</feature>
<feature type="binding site" evidence="1">
    <location>
        <position position="33"/>
    </location>
    <ligand>
        <name>Zn(2+)</name>
        <dbReference type="ChEBI" id="CHEBI:29105"/>
        <label>1</label>
    </ligand>
</feature>
<feature type="binding site" evidence="1">
    <location>
        <position position="34"/>
    </location>
    <ligand>
        <name>Zn(2+)</name>
        <dbReference type="ChEBI" id="CHEBI:29105"/>
        <label>1</label>
    </ligand>
</feature>
<feature type="binding site" evidence="1">
    <location>
        <position position="37"/>
    </location>
    <ligand>
        <name>Zn(2+)</name>
        <dbReference type="ChEBI" id="CHEBI:29105"/>
        <label>1</label>
    </ligand>
</feature>
<feature type="site" description="Essential for Tat translocation through the endosomal membrane" evidence="1">
    <location>
        <position position="11"/>
    </location>
</feature>
<feature type="modified residue" description="N6-acetyllysine; by host PCAF" evidence="1">
    <location>
        <position position="28"/>
    </location>
</feature>
<feature type="modified residue" description="N6-acetyllysine; by host EP300 and GCN5L2" evidence="1">
    <location>
        <position position="50"/>
    </location>
</feature>
<feature type="modified residue" description="N6-acetyllysine; by host EP300 and GCN5L2" evidence="1">
    <location>
        <position position="51"/>
    </location>
</feature>
<feature type="modified residue" description="Asymmetric dimethylarginine; by host PRMT6" evidence="1">
    <location>
        <position position="52"/>
    </location>
</feature>
<feature type="cross-link" description="Glycyl lysine isopeptide (Lys-Gly) (interchain with G-Cter in ubiquitin)" evidence="1">
    <location>
        <position position="71"/>
    </location>
</feature>
<feature type="splice variant" id="VSP_022399" description="In isoform Short.">
    <location>
        <begin position="73"/>
        <end position="99"/>
    </location>
</feature>